<sequence length="232" mass="26133">MQVSDLFIREMPSDCLPRERLLAIGEKALSNQELLAILLRTGSKEADVMTVAATLLKQFKQLSYLQQATLNELMAIKGIGQVKAIELRAAIELGCRIYQSSQIKFGKVTSSQQVAQRLLQEMKGLQQEHLICIYLNTKNDIIQQKTIFKGSLNQSIAHPREIFREAVKYSSARILLAHNHPSGNPTPSPQDIQFTKRMEECGEMMGIQLLDHIILGDSGYISLREENFFASE</sequence>
<reference key="1">
    <citation type="journal article" date="2003" name="Science">
        <title>Role of mobile DNA in the evolution of vancomycin-resistant Enterococcus faecalis.</title>
        <authorList>
            <person name="Paulsen I.T."/>
            <person name="Banerjei L."/>
            <person name="Myers G.S.A."/>
            <person name="Nelson K.E."/>
            <person name="Seshadri R."/>
            <person name="Read T.D."/>
            <person name="Fouts D.E."/>
            <person name="Eisen J.A."/>
            <person name="Gill S.R."/>
            <person name="Heidelberg J.F."/>
            <person name="Tettelin H."/>
            <person name="Dodson R.J."/>
            <person name="Umayam L.A."/>
            <person name="Brinkac L.M."/>
            <person name="Beanan M.J."/>
            <person name="Daugherty S.C."/>
            <person name="DeBoy R.T."/>
            <person name="Durkin S.A."/>
            <person name="Kolonay J.F."/>
            <person name="Madupu R."/>
            <person name="Nelson W.C."/>
            <person name="Vamathevan J.J."/>
            <person name="Tran B."/>
            <person name="Upton J."/>
            <person name="Hansen T."/>
            <person name="Shetty J."/>
            <person name="Khouri H.M."/>
            <person name="Utterback T.R."/>
            <person name="Radune D."/>
            <person name="Ketchum K.A."/>
            <person name="Dougherty B.A."/>
            <person name="Fraser C.M."/>
        </authorList>
    </citation>
    <scope>NUCLEOTIDE SEQUENCE [LARGE SCALE GENOMIC DNA]</scope>
    <source>
        <strain>ATCC 700802 / V583</strain>
    </source>
</reference>
<evidence type="ECO:0000255" key="1">
    <source>
        <dbReference type="PROSITE-ProRule" id="PRU01182"/>
    </source>
</evidence>
<evidence type="ECO:0000305" key="2"/>
<proteinExistence type="inferred from homology"/>
<gene>
    <name type="ordered locus">EF_2926</name>
</gene>
<accession>Q82ZX1</accession>
<organism>
    <name type="scientific">Enterococcus faecalis (strain ATCC 700802 / V583)</name>
    <dbReference type="NCBI Taxonomy" id="226185"/>
    <lineage>
        <taxon>Bacteria</taxon>
        <taxon>Bacillati</taxon>
        <taxon>Bacillota</taxon>
        <taxon>Bacilli</taxon>
        <taxon>Lactobacillales</taxon>
        <taxon>Enterococcaceae</taxon>
        <taxon>Enterococcus</taxon>
    </lineage>
</organism>
<feature type="chain" id="PRO_0000190697" description="UPF0758 protein EF_2926">
    <location>
        <begin position="1"/>
        <end position="232"/>
    </location>
</feature>
<feature type="domain" description="MPN" evidence="1">
    <location>
        <begin position="107"/>
        <end position="229"/>
    </location>
</feature>
<feature type="short sequence motif" description="JAMM motif" evidence="1">
    <location>
        <begin position="178"/>
        <end position="191"/>
    </location>
</feature>
<feature type="binding site" evidence="1">
    <location>
        <position position="178"/>
    </location>
    <ligand>
        <name>Zn(2+)</name>
        <dbReference type="ChEBI" id="CHEBI:29105"/>
        <note>catalytic</note>
    </ligand>
</feature>
<feature type="binding site" evidence="1">
    <location>
        <position position="180"/>
    </location>
    <ligand>
        <name>Zn(2+)</name>
        <dbReference type="ChEBI" id="CHEBI:29105"/>
        <note>catalytic</note>
    </ligand>
</feature>
<feature type="binding site" evidence="1">
    <location>
        <position position="191"/>
    </location>
    <ligand>
        <name>Zn(2+)</name>
        <dbReference type="ChEBI" id="CHEBI:29105"/>
        <note>catalytic</note>
    </ligand>
</feature>
<dbReference type="EMBL" id="AE016830">
    <property type="protein sequence ID" value="AAO82614.1"/>
    <property type="molecule type" value="Genomic_DNA"/>
</dbReference>
<dbReference type="RefSeq" id="NP_816544.1">
    <property type="nucleotide sequence ID" value="NC_004668.1"/>
</dbReference>
<dbReference type="SMR" id="Q82ZX1"/>
<dbReference type="STRING" id="226185.EF_2926"/>
<dbReference type="EnsemblBacteria" id="AAO82614">
    <property type="protein sequence ID" value="AAO82614"/>
    <property type="gene ID" value="EF_2926"/>
</dbReference>
<dbReference type="KEGG" id="efa:EF2926"/>
<dbReference type="PATRIC" id="fig|226185.45.peg.649"/>
<dbReference type="eggNOG" id="COG2003">
    <property type="taxonomic scope" value="Bacteria"/>
</dbReference>
<dbReference type="HOGENOM" id="CLU_073529_0_2_9"/>
<dbReference type="Proteomes" id="UP000001415">
    <property type="component" value="Chromosome"/>
</dbReference>
<dbReference type="GO" id="GO:0046872">
    <property type="term" value="F:metal ion binding"/>
    <property type="evidence" value="ECO:0007669"/>
    <property type="project" value="UniProtKB-KW"/>
</dbReference>
<dbReference type="GO" id="GO:0008237">
    <property type="term" value="F:metallopeptidase activity"/>
    <property type="evidence" value="ECO:0007669"/>
    <property type="project" value="UniProtKB-KW"/>
</dbReference>
<dbReference type="GO" id="GO:0006508">
    <property type="term" value="P:proteolysis"/>
    <property type="evidence" value="ECO:0007669"/>
    <property type="project" value="UniProtKB-KW"/>
</dbReference>
<dbReference type="CDD" id="cd08071">
    <property type="entry name" value="MPN_DUF2466"/>
    <property type="match status" value="1"/>
</dbReference>
<dbReference type="Gene3D" id="1.10.150.20">
    <property type="entry name" value="5' to 3' exonuclease, C-terminal subdomain"/>
    <property type="match status" value="1"/>
</dbReference>
<dbReference type="Gene3D" id="3.40.140.10">
    <property type="entry name" value="Cytidine Deaminase, domain 2"/>
    <property type="match status" value="1"/>
</dbReference>
<dbReference type="InterPro" id="IPR037518">
    <property type="entry name" value="MPN"/>
</dbReference>
<dbReference type="InterPro" id="IPR025657">
    <property type="entry name" value="RadC_JAB"/>
</dbReference>
<dbReference type="InterPro" id="IPR010994">
    <property type="entry name" value="RuvA_2-like"/>
</dbReference>
<dbReference type="InterPro" id="IPR001405">
    <property type="entry name" value="UPF0758"/>
</dbReference>
<dbReference type="InterPro" id="IPR020891">
    <property type="entry name" value="UPF0758_CS"/>
</dbReference>
<dbReference type="InterPro" id="IPR046778">
    <property type="entry name" value="UPF0758_N"/>
</dbReference>
<dbReference type="NCBIfam" id="NF000642">
    <property type="entry name" value="PRK00024.1"/>
    <property type="match status" value="1"/>
</dbReference>
<dbReference type="NCBIfam" id="TIGR00608">
    <property type="entry name" value="radc"/>
    <property type="match status" value="1"/>
</dbReference>
<dbReference type="PANTHER" id="PTHR30471">
    <property type="entry name" value="DNA REPAIR PROTEIN RADC"/>
    <property type="match status" value="1"/>
</dbReference>
<dbReference type="PANTHER" id="PTHR30471:SF3">
    <property type="entry name" value="UPF0758 PROTEIN YEES-RELATED"/>
    <property type="match status" value="1"/>
</dbReference>
<dbReference type="Pfam" id="PF04002">
    <property type="entry name" value="RadC"/>
    <property type="match status" value="1"/>
</dbReference>
<dbReference type="Pfam" id="PF20582">
    <property type="entry name" value="UPF0758_N"/>
    <property type="match status" value="1"/>
</dbReference>
<dbReference type="SUPFAM" id="SSF47781">
    <property type="entry name" value="RuvA domain 2-like"/>
    <property type="match status" value="1"/>
</dbReference>
<dbReference type="PROSITE" id="PS50249">
    <property type="entry name" value="MPN"/>
    <property type="match status" value="1"/>
</dbReference>
<dbReference type="PROSITE" id="PS01302">
    <property type="entry name" value="UPF0758"/>
    <property type="match status" value="1"/>
</dbReference>
<name>Y2926_ENTFA</name>
<keyword id="KW-0378">Hydrolase</keyword>
<keyword id="KW-0479">Metal-binding</keyword>
<keyword id="KW-0482">Metalloprotease</keyword>
<keyword id="KW-0645">Protease</keyword>
<keyword id="KW-1185">Reference proteome</keyword>
<keyword id="KW-0862">Zinc</keyword>
<protein>
    <recommendedName>
        <fullName>UPF0758 protein EF_2926</fullName>
    </recommendedName>
</protein>
<comment type="similarity">
    <text evidence="2">Belongs to the UPF0758 family.</text>
</comment>